<reference key="1">
    <citation type="submission" date="2005-09" db="EMBL/GenBank/DDBJ databases">
        <title>The chloroplast genome of mulberry: structural features and comparative analysis.</title>
        <authorList>
            <person name="Ravi V."/>
            <person name="Khurana J.P."/>
            <person name="Tyagi A.K."/>
            <person name="Khurana P."/>
        </authorList>
    </citation>
    <scope>NUCLEOTIDE SEQUENCE [LARGE SCALE GENOMIC DNA]</scope>
    <source>
        <strain>cv. K2</strain>
    </source>
</reference>
<protein>
    <recommendedName>
        <fullName evidence="1">DNA-directed RNA polymerase subunit beta''</fullName>
        <ecNumber evidence="1">2.7.7.6</ecNumber>
    </recommendedName>
    <alternativeName>
        <fullName evidence="1">PEP</fullName>
    </alternativeName>
    <alternativeName>
        <fullName evidence="1">Plastid-encoded RNA polymerase subunit beta''</fullName>
        <shortName evidence="1">RNA polymerase subunit beta''</shortName>
    </alternativeName>
</protein>
<geneLocation type="chloroplast"/>
<comment type="function">
    <text evidence="1">DNA-dependent RNA polymerase catalyzes the transcription of DNA into RNA using the four ribonucleoside triphosphates as substrates.</text>
</comment>
<comment type="catalytic activity">
    <reaction evidence="1">
        <text>RNA(n) + a ribonucleoside 5'-triphosphate = RNA(n+1) + diphosphate</text>
        <dbReference type="Rhea" id="RHEA:21248"/>
        <dbReference type="Rhea" id="RHEA-COMP:14527"/>
        <dbReference type="Rhea" id="RHEA-COMP:17342"/>
        <dbReference type="ChEBI" id="CHEBI:33019"/>
        <dbReference type="ChEBI" id="CHEBI:61557"/>
        <dbReference type="ChEBI" id="CHEBI:140395"/>
        <dbReference type="EC" id="2.7.7.6"/>
    </reaction>
</comment>
<comment type="cofactor">
    <cofactor evidence="1">
        <name>Zn(2+)</name>
        <dbReference type="ChEBI" id="CHEBI:29105"/>
    </cofactor>
    <text evidence="1">Binds 1 Zn(2+) ion per subunit.</text>
</comment>
<comment type="subunit">
    <text evidence="1">In plastids the minimal PEP RNA polymerase catalytic core is composed of four subunits: alpha, beta, beta', and beta''. When a (nuclear-encoded) sigma factor is associated with the core the holoenzyme is formed, which can initiate transcription.</text>
</comment>
<comment type="subcellular location">
    <subcellularLocation>
        <location evidence="1">Plastid</location>
        <location evidence="1">Chloroplast</location>
    </subcellularLocation>
</comment>
<comment type="similarity">
    <text evidence="1">Belongs to the RNA polymerase beta' chain family. RpoC2 subfamily.</text>
</comment>
<accession>Q09X27</accession>
<proteinExistence type="inferred from homology"/>
<gene>
    <name evidence="1" type="primary">rpoC2</name>
    <name type="ordered locus">MoinCp011</name>
</gene>
<evidence type="ECO:0000255" key="1">
    <source>
        <dbReference type="HAMAP-Rule" id="MF_01324"/>
    </source>
</evidence>
<keyword id="KW-0150">Chloroplast</keyword>
<keyword id="KW-0240">DNA-directed RNA polymerase</keyword>
<keyword id="KW-0479">Metal-binding</keyword>
<keyword id="KW-0548">Nucleotidyltransferase</keyword>
<keyword id="KW-0934">Plastid</keyword>
<keyword id="KW-0804">Transcription</keyword>
<keyword id="KW-0808">Transferase</keyword>
<keyword id="KW-0862">Zinc</keyword>
<organism>
    <name type="scientific">Morus indica</name>
    <name type="common">Mulberry</name>
    <dbReference type="NCBI Taxonomy" id="248361"/>
    <lineage>
        <taxon>Eukaryota</taxon>
        <taxon>Viridiplantae</taxon>
        <taxon>Streptophyta</taxon>
        <taxon>Embryophyta</taxon>
        <taxon>Tracheophyta</taxon>
        <taxon>Spermatophyta</taxon>
        <taxon>Magnoliopsida</taxon>
        <taxon>eudicotyledons</taxon>
        <taxon>Gunneridae</taxon>
        <taxon>Pentapetalae</taxon>
        <taxon>rosids</taxon>
        <taxon>fabids</taxon>
        <taxon>Rosales</taxon>
        <taxon>Moraceae</taxon>
        <taxon>Moreae</taxon>
        <taxon>Morus</taxon>
    </lineage>
</organism>
<sequence length="1389" mass="158034">MEVLMAERADLVFRNKVIDGTAIKRLISRLIDHFGMAYTSHILDQVKTLGFRQATATSISLGIDDLLTIPSKGWLVQDAEQQRLILEKHHHYGNVHAVEKLRQSIEIWYATSEYLRQEMNPNFRMTDPFNPVHMMSFSGARGNASQVHQLVGMRGLMSDPQGQMIDLPIQSNLREGLSLTEYIISCYGARKGVVDTAVRTSDAGYLTRRLVEVVQHIVVRRTDCGTIQGISVSPPNGMMPERIFIQTLIGRVLADYIYIGSRCIAVRNQDIGIGLVNRFITFQTQPISIRTPFTCKSTSWICRLCYGRSPTHGDLVELGEAVGIIAGQSIGEPGTQLTLRTFHTGGVFTGGTAEHVRAPSNGKIKFNEDLVHPTRTRHGHPAFLCSIDLYVTIESEDIIHNVTIPPKSFILVQNDQYVESEQVIAEIRAGTYTFHFKERVRKHIYSDSEGEMHWSTDVYHAPDFTYSNVHLLPKTSHLWILSGGSYKSSVVPFSIHKDQDQTNVYFLSAAKGKARNSFSVNNDQDQGKHKFFTSGLSGKKESGIPDYSEFNRILDTDHSNLIFPSILHKDSDLFLLAKRRRNRFIIPFQWIQEREKELWPRSSISIEIPINGIFRKNSILAYFDDLQYRRKGSGITKYGAIGLHSILKKEDLIEYGGVKEFKPKYQTKVDQFFFIPEEVHILPESFSIMVRNNSIIGVDTRITLNTRSRVGGLVRVEKKNKRIELKIFSGDIHFPVEMDKIFRHSGILIPPGRVKKEFKESKKWKNWIYVQSITPTKKKYFVLVRPVIIYEIADGINLETLFPQDPLQEKDNLELRVVNYILYGNGKPILGISGTCIQLVRTCLVLNWDQGNKSSSSEETHASFVEVSTRDLIRDFLRINLVKSHISYIRKRNDPLGSVLISDNRSDRTNPFYSIYSKEKIRQLLKENQGTIHTLLNRSKESQSLIILSSSNCFEMGPFNDVKHYNVIKESIKRDPLIPIRNSLGPLGTACQVANFYYILKTHNQISVTKNLQLENLKQTFQVLKYYLMDENGRIYNSDPCSNILFNPFNLNWHFLHHNYCEKKSTIISLGQFFFENVCITKHGPHLKSGQVIIVQIDSVVIRSAKSYLATPGATVHGHYGEILSEGDTLVTFIYEKSRSGDITQGLPKVEQVLEVRSIDSISMNLEKRVEGWNERITRILGIPWGFLIGAELTIVQSRISLVNKIQKVYRSQGVQIHNRHIEIIVRQITSKVLVSEDGMSNVFLPGELIGLFRAERTGRALKEAICYQAILLGITKASLNTQSFISEASFQETARVLAKAALRGRIDWLKGLKENVVLGGMIPVGTGFKGLVHRSKQHNNIPLETKKKNLFECEMRDILFHHKELFDFCISTNIHDTSEHLFLGFNDS</sequence>
<feature type="chain" id="PRO_0000277195" description="DNA-directed RNA polymerase subunit beta''">
    <location>
        <begin position="1"/>
        <end position="1389"/>
    </location>
</feature>
<feature type="binding site" evidence="1">
    <location>
        <position position="224"/>
    </location>
    <ligand>
        <name>Zn(2+)</name>
        <dbReference type="ChEBI" id="CHEBI:29105"/>
    </ligand>
</feature>
<feature type="binding site" evidence="1">
    <location>
        <position position="295"/>
    </location>
    <ligand>
        <name>Zn(2+)</name>
        <dbReference type="ChEBI" id="CHEBI:29105"/>
    </ligand>
</feature>
<feature type="binding site" evidence="1">
    <location>
        <position position="302"/>
    </location>
    <ligand>
        <name>Zn(2+)</name>
        <dbReference type="ChEBI" id="CHEBI:29105"/>
    </ligand>
</feature>
<feature type="binding site" evidence="1">
    <location>
        <position position="305"/>
    </location>
    <ligand>
        <name>Zn(2+)</name>
        <dbReference type="ChEBI" id="CHEBI:29105"/>
    </ligand>
</feature>
<name>RPOC2_MORIN</name>
<dbReference type="EC" id="2.7.7.6" evidence="1"/>
<dbReference type="EMBL" id="DQ226511">
    <property type="protein sequence ID" value="ABB20948.1"/>
    <property type="molecule type" value="Genomic_DNA"/>
</dbReference>
<dbReference type="RefSeq" id="YP_762251.1">
    <property type="nucleotide sequence ID" value="NC_008359.1"/>
</dbReference>
<dbReference type="SMR" id="Q09X27"/>
<dbReference type="GeneID" id="4290594"/>
<dbReference type="GO" id="GO:0009507">
    <property type="term" value="C:chloroplast"/>
    <property type="evidence" value="ECO:0007669"/>
    <property type="project" value="UniProtKB-SubCell"/>
</dbReference>
<dbReference type="GO" id="GO:0000428">
    <property type="term" value="C:DNA-directed RNA polymerase complex"/>
    <property type="evidence" value="ECO:0007669"/>
    <property type="project" value="UniProtKB-KW"/>
</dbReference>
<dbReference type="GO" id="GO:0005739">
    <property type="term" value="C:mitochondrion"/>
    <property type="evidence" value="ECO:0007669"/>
    <property type="project" value="GOC"/>
</dbReference>
<dbReference type="GO" id="GO:0003677">
    <property type="term" value="F:DNA binding"/>
    <property type="evidence" value="ECO:0007669"/>
    <property type="project" value="UniProtKB-UniRule"/>
</dbReference>
<dbReference type="GO" id="GO:0003899">
    <property type="term" value="F:DNA-directed RNA polymerase activity"/>
    <property type="evidence" value="ECO:0007669"/>
    <property type="project" value="UniProtKB-UniRule"/>
</dbReference>
<dbReference type="GO" id="GO:0008270">
    <property type="term" value="F:zinc ion binding"/>
    <property type="evidence" value="ECO:0007669"/>
    <property type="project" value="UniProtKB-UniRule"/>
</dbReference>
<dbReference type="GO" id="GO:0006351">
    <property type="term" value="P:DNA-templated transcription"/>
    <property type="evidence" value="ECO:0007669"/>
    <property type="project" value="UniProtKB-UniRule"/>
</dbReference>
<dbReference type="CDD" id="cd02655">
    <property type="entry name" value="RNAP_beta'_C"/>
    <property type="match status" value="1"/>
</dbReference>
<dbReference type="FunFam" id="1.10.132.30:FF:000002">
    <property type="entry name" value="DNA-directed RNA polymerase subunit beta"/>
    <property type="match status" value="1"/>
</dbReference>
<dbReference type="FunFam" id="1.10.1790.20:FF:000002">
    <property type="entry name" value="DNA-directed RNA polymerase subunit beta"/>
    <property type="match status" value="1"/>
</dbReference>
<dbReference type="Gene3D" id="1.10.132.30">
    <property type="match status" value="1"/>
</dbReference>
<dbReference type="Gene3D" id="1.10.150.390">
    <property type="match status" value="1"/>
</dbReference>
<dbReference type="Gene3D" id="1.10.1790.20">
    <property type="match status" value="1"/>
</dbReference>
<dbReference type="Gene3D" id="1.10.274.100">
    <property type="entry name" value="RNA polymerase Rpb1, domain 3"/>
    <property type="match status" value="1"/>
</dbReference>
<dbReference type="HAMAP" id="MF_01324">
    <property type="entry name" value="RNApol_bact_RpoC2"/>
    <property type="match status" value="1"/>
</dbReference>
<dbReference type="InterPro" id="IPR012756">
    <property type="entry name" value="DNA-dir_RpoC2_beta_pp"/>
</dbReference>
<dbReference type="InterPro" id="IPR050254">
    <property type="entry name" value="RNA_pol_beta''_euk"/>
</dbReference>
<dbReference type="InterPro" id="IPR042102">
    <property type="entry name" value="RNA_pol_Rpb1_3_sf"/>
</dbReference>
<dbReference type="InterPro" id="IPR007083">
    <property type="entry name" value="RNA_pol_Rpb1_4"/>
</dbReference>
<dbReference type="InterPro" id="IPR007081">
    <property type="entry name" value="RNA_pol_Rpb1_5"/>
</dbReference>
<dbReference type="InterPro" id="IPR038120">
    <property type="entry name" value="Rpb1_funnel_sf"/>
</dbReference>
<dbReference type="NCBIfam" id="TIGR02388">
    <property type="entry name" value="rpoC2_cyan"/>
    <property type="match status" value="1"/>
</dbReference>
<dbReference type="PANTHER" id="PTHR34995">
    <property type="entry name" value="DNA-DIRECTED RNA POLYMERASE SUBUNIT BETA"/>
    <property type="match status" value="1"/>
</dbReference>
<dbReference type="PANTHER" id="PTHR34995:SF1">
    <property type="entry name" value="DNA-DIRECTED RNA POLYMERASE SUBUNIT BETA"/>
    <property type="match status" value="1"/>
</dbReference>
<dbReference type="Pfam" id="PF05000">
    <property type="entry name" value="RNA_pol_Rpb1_4"/>
    <property type="match status" value="1"/>
</dbReference>
<dbReference type="Pfam" id="PF04998">
    <property type="entry name" value="RNA_pol_Rpb1_5"/>
    <property type="match status" value="2"/>
</dbReference>
<dbReference type="SUPFAM" id="SSF64484">
    <property type="entry name" value="beta and beta-prime subunits of DNA dependent RNA-polymerase"/>
    <property type="match status" value="1"/>
</dbReference>